<dbReference type="EC" id="2.7.4.9" evidence="1"/>
<dbReference type="EMBL" id="CP001182">
    <property type="protein sequence ID" value="ACJ42312.1"/>
    <property type="molecule type" value="Genomic_DNA"/>
</dbReference>
<dbReference type="RefSeq" id="WP_000470769.1">
    <property type="nucleotide sequence ID" value="NC_011586.2"/>
</dbReference>
<dbReference type="SMR" id="B7I585"/>
<dbReference type="KEGG" id="abn:AB57_2969"/>
<dbReference type="HOGENOM" id="CLU_049131_0_2_6"/>
<dbReference type="Proteomes" id="UP000007094">
    <property type="component" value="Chromosome"/>
</dbReference>
<dbReference type="GO" id="GO:0005829">
    <property type="term" value="C:cytosol"/>
    <property type="evidence" value="ECO:0007669"/>
    <property type="project" value="TreeGrafter"/>
</dbReference>
<dbReference type="GO" id="GO:0005524">
    <property type="term" value="F:ATP binding"/>
    <property type="evidence" value="ECO:0007669"/>
    <property type="project" value="UniProtKB-UniRule"/>
</dbReference>
<dbReference type="GO" id="GO:0004798">
    <property type="term" value="F:dTMP kinase activity"/>
    <property type="evidence" value="ECO:0007669"/>
    <property type="project" value="UniProtKB-UniRule"/>
</dbReference>
<dbReference type="GO" id="GO:0006233">
    <property type="term" value="P:dTDP biosynthetic process"/>
    <property type="evidence" value="ECO:0007669"/>
    <property type="project" value="InterPro"/>
</dbReference>
<dbReference type="GO" id="GO:0006235">
    <property type="term" value="P:dTTP biosynthetic process"/>
    <property type="evidence" value="ECO:0007669"/>
    <property type="project" value="UniProtKB-UniRule"/>
</dbReference>
<dbReference type="GO" id="GO:0006227">
    <property type="term" value="P:dUDP biosynthetic process"/>
    <property type="evidence" value="ECO:0007669"/>
    <property type="project" value="TreeGrafter"/>
</dbReference>
<dbReference type="CDD" id="cd01672">
    <property type="entry name" value="TMPK"/>
    <property type="match status" value="1"/>
</dbReference>
<dbReference type="FunFam" id="3.40.50.300:FF:000225">
    <property type="entry name" value="Thymidylate kinase"/>
    <property type="match status" value="1"/>
</dbReference>
<dbReference type="Gene3D" id="3.40.50.300">
    <property type="entry name" value="P-loop containing nucleotide triphosphate hydrolases"/>
    <property type="match status" value="1"/>
</dbReference>
<dbReference type="HAMAP" id="MF_00165">
    <property type="entry name" value="Thymidylate_kinase"/>
    <property type="match status" value="1"/>
</dbReference>
<dbReference type="InterPro" id="IPR027417">
    <property type="entry name" value="P-loop_NTPase"/>
</dbReference>
<dbReference type="InterPro" id="IPR039430">
    <property type="entry name" value="Thymidylate_kin-like_dom"/>
</dbReference>
<dbReference type="InterPro" id="IPR018094">
    <property type="entry name" value="Thymidylate_kinase"/>
</dbReference>
<dbReference type="NCBIfam" id="TIGR00041">
    <property type="entry name" value="DTMP_kinase"/>
    <property type="match status" value="1"/>
</dbReference>
<dbReference type="PANTHER" id="PTHR10344">
    <property type="entry name" value="THYMIDYLATE KINASE"/>
    <property type="match status" value="1"/>
</dbReference>
<dbReference type="PANTHER" id="PTHR10344:SF4">
    <property type="entry name" value="UMP-CMP KINASE 2, MITOCHONDRIAL"/>
    <property type="match status" value="1"/>
</dbReference>
<dbReference type="Pfam" id="PF02223">
    <property type="entry name" value="Thymidylate_kin"/>
    <property type="match status" value="1"/>
</dbReference>
<dbReference type="SUPFAM" id="SSF52540">
    <property type="entry name" value="P-loop containing nucleoside triphosphate hydrolases"/>
    <property type="match status" value="1"/>
</dbReference>
<reference key="1">
    <citation type="journal article" date="2008" name="J. Bacteriol.">
        <title>Comparative genome sequence analysis of multidrug-resistant Acinetobacter baumannii.</title>
        <authorList>
            <person name="Adams M.D."/>
            <person name="Goglin K."/>
            <person name="Molyneaux N."/>
            <person name="Hujer K.M."/>
            <person name="Lavender H."/>
            <person name="Jamison J.J."/>
            <person name="MacDonald I.J."/>
            <person name="Martin K.M."/>
            <person name="Russo T."/>
            <person name="Campagnari A.A."/>
            <person name="Hujer A.M."/>
            <person name="Bonomo R.A."/>
            <person name="Gill S.R."/>
        </authorList>
    </citation>
    <scope>NUCLEOTIDE SEQUENCE [LARGE SCALE GENOMIC DNA]</scope>
    <source>
        <strain>AB0057</strain>
    </source>
</reference>
<feature type="chain" id="PRO_1000190753" description="Thymidylate kinase">
    <location>
        <begin position="1"/>
        <end position="199"/>
    </location>
</feature>
<feature type="binding site" evidence="1">
    <location>
        <begin position="7"/>
        <end position="14"/>
    </location>
    <ligand>
        <name>ATP</name>
        <dbReference type="ChEBI" id="CHEBI:30616"/>
    </ligand>
</feature>
<gene>
    <name evidence="1" type="primary">tmk</name>
    <name type="ordered locus">AB57_2969</name>
</gene>
<sequence length="199" mass="22770">MFISFEGTEGVGKTTLIRKIHQHFEEQGKQVVLTREPGGTPLAEQIRSMLLAVNHNENMSHDTELLLIYAARAQHLQQVILPALESNKIVLSDRFTDASFAYQCSGRGLSQDKLQLLNQNFVSSMPEVTFWLDAPIELGMNRARERGALDRFEQEKLSFFTKVREGYETLWKAEPERIKRLDATQSPDQVFEQALQYLA</sequence>
<accession>B7I585</accession>
<proteinExistence type="inferred from homology"/>
<evidence type="ECO:0000255" key="1">
    <source>
        <dbReference type="HAMAP-Rule" id="MF_00165"/>
    </source>
</evidence>
<keyword id="KW-0067">ATP-binding</keyword>
<keyword id="KW-0418">Kinase</keyword>
<keyword id="KW-0545">Nucleotide biosynthesis</keyword>
<keyword id="KW-0547">Nucleotide-binding</keyword>
<keyword id="KW-0808">Transferase</keyword>
<organism>
    <name type="scientific">Acinetobacter baumannii (strain AB0057)</name>
    <dbReference type="NCBI Taxonomy" id="480119"/>
    <lineage>
        <taxon>Bacteria</taxon>
        <taxon>Pseudomonadati</taxon>
        <taxon>Pseudomonadota</taxon>
        <taxon>Gammaproteobacteria</taxon>
        <taxon>Moraxellales</taxon>
        <taxon>Moraxellaceae</taxon>
        <taxon>Acinetobacter</taxon>
        <taxon>Acinetobacter calcoaceticus/baumannii complex</taxon>
    </lineage>
</organism>
<protein>
    <recommendedName>
        <fullName evidence="1">Thymidylate kinase</fullName>
        <ecNumber evidence="1">2.7.4.9</ecNumber>
    </recommendedName>
    <alternativeName>
        <fullName evidence="1">dTMP kinase</fullName>
    </alternativeName>
</protein>
<name>KTHY_ACIB5</name>
<comment type="function">
    <text evidence="1">Phosphorylation of dTMP to form dTDP in both de novo and salvage pathways of dTTP synthesis.</text>
</comment>
<comment type="catalytic activity">
    <reaction evidence="1">
        <text>dTMP + ATP = dTDP + ADP</text>
        <dbReference type="Rhea" id="RHEA:13517"/>
        <dbReference type="ChEBI" id="CHEBI:30616"/>
        <dbReference type="ChEBI" id="CHEBI:58369"/>
        <dbReference type="ChEBI" id="CHEBI:63528"/>
        <dbReference type="ChEBI" id="CHEBI:456216"/>
        <dbReference type="EC" id="2.7.4.9"/>
    </reaction>
</comment>
<comment type="similarity">
    <text evidence="1">Belongs to the thymidylate kinase family.</text>
</comment>